<organism>
    <name type="scientific">Monosiga brevicollis</name>
    <name type="common">Choanoflagellate</name>
    <dbReference type="NCBI Taxonomy" id="81824"/>
    <lineage>
        <taxon>Eukaryota</taxon>
        <taxon>Choanoflagellata</taxon>
        <taxon>Craspedida</taxon>
        <taxon>Salpingoecidae</taxon>
        <taxon>Monosiga</taxon>
    </lineage>
</organism>
<proteinExistence type="inferred from homology"/>
<reference key="1">
    <citation type="journal article" date="2008" name="Nature">
        <title>The genome of the choanoflagellate Monosiga brevicollis and the origin of metazoans.</title>
        <authorList>
            <consortium name="JGI Sequencing"/>
            <person name="King N."/>
            <person name="Westbrook M.J."/>
            <person name="Young S.L."/>
            <person name="Kuo A."/>
            <person name="Abedin M."/>
            <person name="Chapman J."/>
            <person name="Fairclough S."/>
            <person name="Hellsten U."/>
            <person name="Isogai Y."/>
            <person name="Letunic I."/>
            <person name="Marr M."/>
            <person name="Pincus D."/>
            <person name="Putnam N."/>
            <person name="Rokas A."/>
            <person name="Wright K.J."/>
            <person name="Zuzow R."/>
            <person name="Dirks W."/>
            <person name="Good M."/>
            <person name="Goodstein D."/>
            <person name="Lemons D."/>
            <person name="Li W."/>
            <person name="Lyons J.B."/>
            <person name="Morris A."/>
            <person name="Nichols S."/>
            <person name="Richter D.J."/>
            <person name="Salamov A."/>
            <person name="Bork P."/>
            <person name="Lim W.A."/>
            <person name="Manning G."/>
            <person name="Miller W.T."/>
            <person name="McGinnis W."/>
            <person name="Shapiro H."/>
            <person name="Tjian R."/>
            <person name="Grigoriev I.V."/>
            <person name="Rokhsar D."/>
        </authorList>
    </citation>
    <scope>NUCLEOTIDE SEQUENCE [LARGE SCALE GENOMIC DNA]</scope>
    <source>
        <strain>MX1 / ATCC 50154</strain>
    </source>
</reference>
<accession>A9UZS7</accession>
<keyword id="KW-0539">Nucleus</keyword>
<keyword id="KW-1185">Reference proteome</keyword>
<keyword id="KW-0677">Repeat</keyword>
<keyword id="KW-0690">Ribosome biogenesis</keyword>
<keyword id="KW-0698">rRNA processing</keyword>
<keyword id="KW-0853">WD repeat</keyword>
<comment type="function">
    <text evidence="1">Required for maturation of ribosomal RNAs and formation of the large ribosomal subunit.</text>
</comment>
<comment type="subcellular location">
    <subcellularLocation>
        <location evidence="1">Nucleus</location>
        <location evidence="1">Nucleolus</location>
    </subcellularLocation>
    <subcellularLocation>
        <location evidence="1">Nucleus</location>
        <location evidence="1">Nucleoplasm</location>
    </subcellularLocation>
</comment>
<comment type="similarity">
    <text evidence="1">Belongs to the WD repeat BOP1/ERB1 family.</text>
</comment>
<dbReference type="EMBL" id="CH991551">
    <property type="protein sequence ID" value="EDQ89285.1"/>
    <property type="molecule type" value="Genomic_DNA"/>
</dbReference>
<dbReference type="SMR" id="A9UZS7"/>
<dbReference type="FunCoup" id="A9UZS7">
    <property type="interactions" value="899"/>
</dbReference>
<dbReference type="STRING" id="81824.A9UZS7"/>
<dbReference type="EnsemblProtists" id="EDQ89285">
    <property type="protein sequence ID" value="EDQ89285"/>
    <property type="gene ID" value="MONBRDRAFT_37129"/>
</dbReference>
<dbReference type="KEGG" id="mbr:MONBRDRAFT_37129"/>
<dbReference type="eggNOG" id="KOG0650">
    <property type="taxonomic scope" value="Eukaryota"/>
</dbReference>
<dbReference type="InParanoid" id="A9UZS7"/>
<dbReference type="OMA" id="MRPAKGE"/>
<dbReference type="Proteomes" id="UP000001357">
    <property type="component" value="Unassembled WGS sequence"/>
</dbReference>
<dbReference type="GO" id="GO:0005654">
    <property type="term" value="C:nucleoplasm"/>
    <property type="evidence" value="ECO:0007669"/>
    <property type="project" value="UniProtKB-SubCell"/>
</dbReference>
<dbReference type="GO" id="GO:0070545">
    <property type="term" value="C:PeBoW complex"/>
    <property type="evidence" value="ECO:0000318"/>
    <property type="project" value="GO_Central"/>
</dbReference>
<dbReference type="GO" id="GO:0030687">
    <property type="term" value="C:preribosome, large subunit precursor"/>
    <property type="evidence" value="ECO:0000318"/>
    <property type="project" value="GO_Central"/>
</dbReference>
<dbReference type="GO" id="GO:0043021">
    <property type="term" value="F:ribonucleoprotein complex binding"/>
    <property type="evidence" value="ECO:0000318"/>
    <property type="project" value="GO_Central"/>
</dbReference>
<dbReference type="GO" id="GO:0000466">
    <property type="term" value="P:maturation of 5.8S rRNA from tricistronic rRNA transcript (SSU-rRNA, 5.8S rRNA, LSU-rRNA)"/>
    <property type="evidence" value="ECO:0007669"/>
    <property type="project" value="UniProtKB-UniRule"/>
</dbReference>
<dbReference type="GO" id="GO:0000463">
    <property type="term" value="P:maturation of LSU-rRNA from tricistronic rRNA transcript (SSU-rRNA, 5.8S rRNA, LSU-rRNA)"/>
    <property type="evidence" value="ECO:0000318"/>
    <property type="project" value="GO_Central"/>
</dbReference>
<dbReference type="FunFam" id="2.130.10.10:FF:000061">
    <property type="entry name" value="Ribosome biogenesis protein BOP1 homolog"/>
    <property type="match status" value="1"/>
</dbReference>
<dbReference type="Gene3D" id="2.130.10.10">
    <property type="entry name" value="YVTN repeat-like/Quinoprotein amine dehydrogenase"/>
    <property type="match status" value="1"/>
</dbReference>
<dbReference type="HAMAP" id="MF_03027">
    <property type="entry name" value="BOP1"/>
    <property type="match status" value="1"/>
</dbReference>
<dbReference type="InterPro" id="IPR028598">
    <property type="entry name" value="BOP1/Erb1"/>
</dbReference>
<dbReference type="InterPro" id="IPR012953">
    <property type="entry name" value="BOP1_N_dom"/>
</dbReference>
<dbReference type="InterPro" id="IPR015943">
    <property type="entry name" value="WD40/YVTN_repeat-like_dom_sf"/>
</dbReference>
<dbReference type="InterPro" id="IPR019775">
    <property type="entry name" value="WD40_repeat_CS"/>
</dbReference>
<dbReference type="InterPro" id="IPR036322">
    <property type="entry name" value="WD40_repeat_dom_sf"/>
</dbReference>
<dbReference type="InterPro" id="IPR001680">
    <property type="entry name" value="WD40_rpt"/>
</dbReference>
<dbReference type="PANTHER" id="PTHR17605:SF0">
    <property type="entry name" value="RIBOSOME BIOGENESIS PROTEIN BOP1"/>
    <property type="match status" value="1"/>
</dbReference>
<dbReference type="PANTHER" id="PTHR17605">
    <property type="entry name" value="RIBOSOME BIOGENESIS PROTEIN BOP1 BLOCK OF PROLIFERATION 1 PROTEIN"/>
    <property type="match status" value="1"/>
</dbReference>
<dbReference type="Pfam" id="PF08145">
    <property type="entry name" value="BOP1NT"/>
    <property type="match status" value="1"/>
</dbReference>
<dbReference type="Pfam" id="PF00400">
    <property type="entry name" value="WD40"/>
    <property type="match status" value="3"/>
</dbReference>
<dbReference type="SMART" id="SM01035">
    <property type="entry name" value="BOP1NT"/>
    <property type="match status" value="1"/>
</dbReference>
<dbReference type="SMART" id="SM00320">
    <property type="entry name" value="WD40"/>
    <property type="match status" value="7"/>
</dbReference>
<dbReference type="SUPFAM" id="SSF50978">
    <property type="entry name" value="WD40 repeat-like"/>
    <property type="match status" value="1"/>
</dbReference>
<dbReference type="PROSITE" id="PS00678">
    <property type="entry name" value="WD_REPEATS_1"/>
    <property type="match status" value="1"/>
</dbReference>
<dbReference type="PROSITE" id="PS50082">
    <property type="entry name" value="WD_REPEATS_2"/>
    <property type="match status" value="1"/>
</dbReference>
<dbReference type="PROSITE" id="PS50294">
    <property type="entry name" value="WD_REPEATS_REGION"/>
    <property type="match status" value="1"/>
</dbReference>
<sequence>MPRRVRAQKRTAGVVEDEEVKAEQVRREHKAKQKQAVGSDAEQEEEELFPDSLHGPDSESDVTDDEQIDEEARQADRDLLKELVTLQGLNGEDPSDADNDDDDDEEEAASDDDDEEEDAEPSSDSSNEASDAGQEEGTTDPHTTTDDKASATTQMVVYSSDDDTSDEEHSLNRVGRIPMEWYEDYEHIGYDLNGKRIRKPKQKDRLEKFLDAFEAGNNGRTIYDPVTGKEIELTDDDINMIKRIQSGQLPDTGINPYEDYVDFFTHEKMQTPVVDKPEPKRRFVPSKWEHKKIMKIVRSIRKGLIKLPTSDDEKDKSSEEEQYYDVWGNEDDPNDPRIKVRQANHIAAPKVALPHHAESYNPPEEYLPTDAEAEKWRNAHEDDRERNYLPHKYGSLRLVPAYDQYIQERFHRCLDLYLCPRARRIRMNVDPEDLLPKLPKPEDLQPFPSAPSLVYRGHKARVTSISCDPTGQWLVSGSDDKTIRVWEISTGRCVRVVTVDAEVNMVAWCPNAGVSIVAVAHGHTVSLICPRVATAAIDKATAVLCNQSIEKPSQGAEEGMRATPTWNRIRGERQDQDGIFFEIPHHAEVMQVTWHHKGNYFASVMPRAETQSVCVHSLNRQSTQHPFQKRNRDVQRVLFHPTQPLFFVATKTHVRVYNLQAQALVKKLLTGVRWLSSLAIHPAGDNLIIGSYDKRLCWFDMDLSIKPYKILRYHKYALRQVCFHKKYPIFASCGDDGNVHVLHGMVYNDLGQNPLIVPVKIIKAHNQTSDGMGVMDCTFHPSQPWLFSAGSDGSIKLHV</sequence>
<evidence type="ECO:0000255" key="1">
    <source>
        <dbReference type="HAMAP-Rule" id="MF_03027"/>
    </source>
</evidence>
<evidence type="ECO:0000256" key="2">
    <source>
        <dbReference type="SAM" id="MobiDB-lite"/>
    </source>
</evidence>
<feature type="chain" id="PRO_0000370409" description="Ribosome biogenesis protein BOP1 homolog">
    <location>
        <begin position="1"/>
        <end position="799"/>
    </location>
</feature>
<feature type="repeat" description="WD 1">
    <location>
        <begin position="457"/>
        <end position="498"/>
    </location>
</feature>
<feature type="repeat" description="WD 2">
    <location>
        <begin position="500"/>
        <end position="538"/>
    </location>
</feature>
<feature type="repeat" description="WD 3">
    <location>
        <begin position="584"/>
        <end position="626"/>
    </location>
</feature>
<feature type="repeat" description="WD 4">
    <location>
        <begin position="629"/>
        <end position="669"/>
    </location>
</feature>
<feature type="repeat" description="WD 5">
    <location>
        <begin position="670"/>
        <end position="709"/>
    </location>
</feature>
<feature type="repeat" description="WD 6">
    <location>
        <begin position="713"/>
        <end position="752"/>
    </location>
</feature>
<feature type="repeat" description="WD 7">
    <location>
        <begin position="769"/>
        <end position="799"/>
    </location>
</feature>
<feature type="region of interest" description="Disordered" evidence="2">
    <location>
        <begin position="1"/>
        <end position="171"/>
    </location>
</feature>
<feature type="compositionally biased region" description="Acidic residues" evidence="2">
    <location>
        <begin position="58"/>
        <end position="69"/>
    </location>
</feature>
<feature type="compositionally biased region" description="Basic and acidic residues" evidence="2">
    <location>
        <begin position="70"/>
        <end position="81"/>
    </location>
</feature>
<feature type="compositionally biased region" description="Acidic residues" evidence="2">
    <location>
        <begin position="93"/>
        <end position="121"/>
    </location>
</feature>
<feature type="compositionally biased region" description="Low complexity" evidence="2">
    <location>
        <begin position="122"/>
        <end position="132"/>
    </location>
</feature>
<protein>
    <recommendedName>
        <fullName evidence="1">Ribosome biogenesis protein BOP1 homolog</fullName>
    </recommendedName>
</protein>
<name>BOP1_MONBE</name>
<gene>
    <name type="ORF">37129</name>
</gene>